<organism>
    <name type="scientific">Mycobacterium tuberculosis (strain ATCC 25618 / H37Rv)</name>
    <dbReference type="NCBI Taxonomy" id="83332"/>
    <lineage>
        <taxon>Bacteria</taxon>
        <taxon>Bacillati</taxon>
        <taxon>Actinomycetota</taxon>
        <taxon>Actinomycetes</taxon>
        <taxon>Mycobacteriales</taxon>
        <taxon>Mycobacteriaceae</taxon>
        <taxon>Mycobacterium</taxon>
        <taxon>Mycobacterium tuberculosis complex</taxon>
    </lineage>
</organism>
<comment type="function">
    <text evidence="1">Phosphorylase is an important allosteric enzyme in carbohydrate metabolism. Enzymes from different sources differ in their regulatory mechanisms and in their natural substrates. However, all known phosphorylases share catalytic and structural properties (By similarity).</text>
</comment>
<comment type="catalytic activity">
    <reaction>
        <text>[(1-&gt;4)-alpha-D-glucosyl](n) + phosphate = [(1-&gt;4)-alpha-D-glucosyl](n-1) + alpha-D-glucose 1-phosphate</text>
        <dbReference type="Rhea" id="RHEA:41732"/>
        <dbReference type="Rhea" id="RHEA-COMP:9584"/>
        <dbReference type="Rhea" id="RHEA-COMP:9586"/>
        <dbReference type="ChEBI" id="CHEBI:15444"/>
        <dbReference type="ChEBI" id="CHEBI:43474"/>
        <dbReference type="ChEBI" id="CHEBI:58601"/>
        <dbReference type="EC" id="2.4.1.1"/>
    </reaction>
</comment>
<comment type="cofactor">
    <cofactor evidence="1">
        <name>pyridoxal 5'-phosphate</name>
        <dbReference type="ChEBI" id="CHEBI:597326"/>
    </cofactor>
</comment>
<comment type="miscellaneous">
    <text>Was identified as a high-confidence drug target.</text>
</comment>
<comment type="similarity">
    <text evidence="2">Belongs to the glycogen phosphorylase family.</text>
</comment>
<accession>P9WMW1</accession>
<accession>L0T6B6</accession>
<accession>Q10639</accession>
<gene>
    <name type="primary">glgP</name>
    <name type="ordered locus">Rv1328</name>
    <name type="ORF">MTCY130.13</name>
</gene>
<evidence type="ECO:0000250" key="1"/>
<evidence type="ECO:0000305" key="2"/>
<sequence>MKALRRFTVRAHLPERLAALDQLSTNLRWSWDKPTQDLFAAIDPALWEQCGHDPVALLGAVNPARLDELALDAEFLGALDELAADLNDYLSRPLWYQEQQDAGVAAQALPTGIAYFSLEFGVAEVLPNYSGGLGILAGDHLKSASDLGVPLIAVGLYYRSGYFRQSLTADGWQHETYPSLDPQGLPLRLLTDANGDPVLVEVALGDNAVLRARIWVAQVGRVPLLLLDSDIPENEHDLRNVTDRLYGGDQEHRIKQEILAGIGGVRAIRAYTAVEKLTPPEVFHMNEGHAGFLGIERIRELVTDAGLDFDTALTVVRSSTVFTTHTPVPAGIDRFPLEMVQRYVNDQRGDGRSRLLPGLPADRIVALGAEDDPAKFNMAHMGLRLAQRANGVSLLHGRVSRAMFNELWAGFDPDEVPIGSVTNGVHAPTWAAPQWLQLGRELAGSDSLREPVVWQRLHQVDPAHLWWIRSQLRSMLVEDVRARLRQSWLERGATDAELGWIATAFDPNVLTVGFARRVPTYKRLTLMLRDPDRLEQLLLDEQRPIQLIVAGKSHPADDGGKALIQQVVRFADRPQVRHRIAFLPNYDMSMARLLYWGCDVWLNNPLRPLEACGTSGMKSALNGGLNLSIRDGWWDEWYDGENGWEIPSADGVADENRRDDLEAGALYDLLAQAVAPKFYERDERGVPQRWVEMVRHTLQTLGPKVLASRMVRDYVEHYYAPAAQSFRRTAGAQFDAARELADYRRRAEEAWPKIEIADVDSTGLPDTPLLGSQLTLTATVRLAGLRPNDVTVQGVLGRVDAGDVLMDPVTVEMAHTGTGDGGYEIFSTTTPLPLAGPVGYTVRVLPRHPMLAASNELGLVTLA</sequence>
<feature type="chain" id="PRO_0000188556" description="Glycogen phosphorylase">
    <location>
        <begin position="1"/>
        <end position="863"/>
    </location>
</feature>
<feature type="modified residue" description="N6-(pyridoxal phosphate)lysine" evidence="1">
    <location>
        <position position="618"/>
    </location>
</feature>
<keyword id="KW-0021">Allosteric enzyme</keyword>
<keyword id="KW-0119">Carbohydrate metabolism</keyword>
<keyword id="KW-0321">Glycogen metabolism</keyword>
<keyword id="KW-0328">Glycosyltransferase</keyword>
<keyword id="KW-0663">Pyridoxal phosphate</keyword>
<keyword id="KW-1185">Reference proteome</keyword>
<keyword id="KW-0808">Transferase</keyword>
<reference key="1">
    <citation type="journal article" date="1998" name="Nature">
        <title>Deciphering the biology of Mycobacterium tuberculosis from the complete genome sequence.</title>
        <authorList>
            <person name="Cole S.T."/>
            <person name="Brosch R."/>
            <person name="Parkhill J."/>
            <person name="Garnier T."/>
            <person name="Churcher C.M."/>
            <person name="Harris D.E."/>
            <person name="Gordon S.V."/>
            <person name="Eiglmeier K."/>
            <person name="Gas S."/>
            <person name="Barry C.E. III"/>
            <person name="Tekaia F."/>
            <person name="Badcock K."/>
            <person name="Basham D."/>
            <person name="Brown D."/>
            <person name="Chillingworth T."/>
            <person name="Connor R."/>
            <person name="Davies R.M."/>
            <person name="Devlin K."/>
            <person name="Feltwell T."/>
            <person name="Gentles S."/>
            <person name="Hamlin N."/>
            <person name="Holroyd S."/>
            <person name="Hornsby T."/>
            <person name="Jagels K."/>
            <person name="Krogh A."/>
            <person name="McLean J."/>
            <person name="Moule S."/>
            <person name="Murphy L.D."/>
            <person name="Oliver S."/>
            <person name="Osborne J."/>
            <person name="Quail M.A."/>
            <person name="Rajandream M.A."/>
            <person name="Rogers J."/>
            <person name="Rutter S."/>
            <person name="Seeger K."/>
            <person name="Skelton S."/>
            <person name="Squares S."/>
            <person name="Squares R."/>
            <person name="Sulston J.E."/>
            <person name="Taylor K."/>
            <person name="Whitehead S."/>
            <person name="Barrell B.G."/>
        </authorList>
    </citation>
    <scope>NUCLEOTIDE SEQUENCE [LARGE SCALE GENOMIC DNA]</scope>
    <source>
        <strain>ATCC 25618 / H37Rv</strain>
    </source>
</reference>
<reference key="2">
    <citation type="journal article" date="2008" name="BMC Syst. Biol.">
        <title>targetTB: a target identification pipeline for Mycobacterium tuberculosis through an interactome, reactome and genome-scale structural analysis.</title>
        <authorList>
            <person name="Raman K."/>
            <person name="Yeturu K."/>
            <person name="Chandra N."/>
        </authorList>
    </citation>
    <scope>IDENTIFICATION AS A DRUG TARGET [LARGE SCALE ANALYSIS]</scope>
</reference>
<reference key="3">
    <citation type="journal article" date="2011" name="Mol. Cell. Proteomics">
        <title>Proteogenomic analysis of Mycobacterium tuberculosis by high resolution mass spectrometry.</title>
        <authorList>
            <person name="Kelkar D.S."/>
            <person name="Kumar D."/>
            <person name="Kumar P."/>
            <person name="Balakrishnan L."/>
            <person name="Muthusamy B."/>
            <person name="Yadav A.K."/>
            <person name="Shrivastava P."/>
            <person name="Marimuthu A."/>
            <person name="Anand S."/>
            <person name="Sundaram H."/>
            <person name="Kingsbury R."/>
            <person name="Harsha H.C."/>
            <person name="Nair B."/>
            <person name="Prasad T.S."/>
            <person name="Chauhan D.S."/>
            <person name="Katoch K."/>
            <person name="Katoch V.M."/>
            <person name="Kumar P."/>
            <person name="Chaerkady R."/>
            <person name="Ramachandran S."/>
            <person name="Dash D."/>
            <person name="Pandey A."/>
        </authorList>
    </citation>
    <scope>IDENTIFICATION BY MASS SPECTROMETRY [LARGE SCALE ANALYSIS]</scope>
    <source>
        <strain>ATCC 25618 / H37Rv</strain>
    </source>
</reference>
<protein>
    <recommendedName>
        <fullName>Glycogen phosphorylase</fullName>
        <ecNumber>2.4.1.1</ecNumber>
    </recommendedName>
</protein>
<dbReference type="EC" id="2.4.1.1"/>
<dbReference type="EMBL" id="AL123456">
    <property type="protein sequence ID" value="CCP44086.1"/>
    <property type="molecule type" value="Genomic_DNA"/>
</dbReference>
<dbReference type="PIR" id="D70770">
    <property type="entry name" value="D70770"/>
</dbReference>
<dbReference type="RefSeq" id="NP_215844.1">
    <property type="nucleotide sequence ID" value="NC_000962.3"/>
</dbReference>
<dbReference type="RefSeq" id="WP_003901135.1">
    <property type="nucleotide sequence ID" value="NZ_NVQJ01000031.1"/>
</dbReference>
<dbReference type="SMR" id="P9WMW1"/>
<dbReference type="FunCoup" id="P9WMW1">
    <property type="interactions" value="338"/>
</dbReference>
<dbReference type="STRING" id="83332.Rv1328"/>
<dbReference type="PaxDb" id="83332-Rv1328"/>
<dbReference type="GeneID" id="886886"/>
<dbReference type="KEGG" id="mtu:Rv1328"/>
<dbReference type="KEGG" id="mtv:RVBD_1328"/>
<dbReference type="TubercuList" id="Rv1328"/>
<dbReference type="eggNOG" id="COG0058">
    <property type="taxonomic scope" value="Bacteria"/>
</dbReference>
<dbReference type="InParanoid" id="P9WMW1"/>
<dbReference type="OrthoDB" id="9760804at2"/>
<dbReference type="PhylomeDB" id="P9WMW1"/>
<dbReference type="Proteomes" id="UP000001584">
    <property type="component" value="Chromosome"/>
</dbReference>
<dbReference type="GO" id="GO:0005829">
    <property type="term" value="C:cytosol"/>
    <property type="evidence" value="ECO:0007005"/>
    <property type="project" value="MTBBASE"/>
</dbReference>
<dbReference type="GO" id="GO:0005886">
    <property type="term" value="C:plasma membrane"/>
    <property type="evidence" value="ECO:0007005"/>
    <property type="project" value="MTBBASE"/>
</dbReference>
<dbReference type="GO" id="GO:0008184">
    <property type="term" value="F:glycogen phosphorylase activity"/>
    <property type="evidence" value="ECO:0007669"/>
    <property type="project" value="InterPro"/>
</dbReference>
<dbReference type="GO" id="GO:0030170">
    <property type="term" value="F:pyridoxal phosphate binding"/>
    <property type="evidence" value="ECO:0007669"/>
    <property type="project" value="InterPro"/>
</dbReference>
<dbReference type="GO" id="GO:0005977">
    <property type="term" value="P:glycogen metabolic process"/>
    <property type="evidence" value="ECO:0007669"/>
    <property type="project" value="UniProtKB-KW"/>
</dbReference>
<dbReference type="CDD" id="cd04299">
    <property type="entry name" value="GT35_Glycogen_Phosphorylase-like"/>
    <property type="match status" value="1"/>
</dbReference>
<dbReference type="FunFam" id="3.40.50.2000:FF:000341">
    <property type="entry name" value="Glycogen phosphorylase"/>
    <property type="match status" value="1"/>
</dbReference>
<dbReference type="Gene3D" id="3.40.50.2000">
    <property type="entry name" value="Glycogen Phosphorylase B"/>
    <property type="match status" value="3"/>
</dbReference>
<dbReference type="InterPro" id="IPR011834">
    <property type="entry name" value="Agluc_phsphrylas"/>
</dbReference>
<dbReference type="InterPro" id="IPR000811">
    <property type="entry name" value="Glyco_trans_35"/>
</dbReference>
<dbReference type="InterPro" id="IPR052182">
    <property type="entry name" value="Glycogen/Maltodextrin_Phosph"/>
</dbReference>
<dbReference type="InterPro" id="IPR024517">
    <property type="entry name" value="Glycogen_phosphorylase_DUF3417"/>
</dbReference>
<dbReference type="InterPro" id="IPR035090">
    <property type="entry name" value="Pyridoxal_P_attach_site"/>
</dbReference>
<dbReference type="NCBIfam" id="TIGR02094">
    <property type="entry name" value="more_P_ylases"/>
    <property type="match status" value="1"/>
</dbReference>
<dbReference type="PANTHER" id="PTHR42655">
    <property type="entry name" value="GLYCOGEN PHOSPHORYLASE"/>
    <property type="match status" value="1"/>
</dbReference>
<dbReference type="PANTHER" id="PTHR42655:SF1">
    <property type="entry name" value="GLYCOGEN PHOSPHORYLASE"/>
    <property type="match status" value="1"/>
</dbReference>
<dbReference type="Pfam" id="PF11897">
    <property type="entry name" value="DUF3417"/>
    <property type="match status" value="1"/>
</dbReference>
<dbReference type="Pfam" id="PF00343">
    <property type="entry name" value="Phosphorylase"/>
    <property type="match status" value="1"/>
</dbReference>
<dbReference type="PIRSF" id="PIRSF000460">
    <property type="entry name" value="Pprylas_GlgP"/>
    <property type="match status" value="1"/>
</dbReference>
<dbReference type="SUPFAM" id="SSF53756">
    <property type="entry name" value="UDP-Glycosyltransferase/glycogen phosphorylase"/>
    <property type="match status" value="1"/>
</dbReference>
<dbReference type="PROSITE" id="PS00102">
    <property type="entry name" value="PHOSPHORYLASE"/>
    <property type="match status" value="1"/>
</dbReference>
<proteinExistence type="evidence at protein level"/>
<name>PHSG_MYCTU</name>